<accession>C4PZQ3</accession>
<accession>G4VET5</accession>
<proteinExistence type="inferred from homology"/>
<keyword id="KW-0004">4Fe-4S</keyword>
<keyword id="KW-0408">Iron</keyword>
<keyword id="KW-0411">Iron-sulfur</keyword>
<keyword id="KW-0479">Metal-binding</keyword>
<keyword id="KW-0496">Mitochondrion</keyword>
<keyword id="KW-1185">Reference proteome</keyword>
<keyword id="KW-0949">S-adenosyl-L-methionine</keyword>
<keyword id="KW-0808">Transferase</keyword>
<feature type="chain" id="PRO_0000398229" description="Lipoyl synthase, mitochondrial">
    <location>
        <begin position="1"/>
        <end position="410"/>
    </location>
</feature>
<feature type="domain" description="Radical SAM core" evidence="2">
    <location>
        <begin position="148"/>
        <end position="379"/>
    </location>
</feature>
<feature type="binding site" evidence="1">
    <location>
        <position position="134"/>
    </location>
    <ligand>
        <name>[4Fe-4S] cluster</name>
        <dbReference type="ChEBI" id="CHEBI:49883"/>
        <label>1</label>
    </ligand>
</feature>
<feature type="binding site" evidence="1">
    <location>
        <position position="139"/>
    </location>
    <ligand>
        <name>[4Fe-4S] cluster</name>
        <dbReference type="ChEBI" id="CHEBI:49883"/>
        <label>1</label>
    </ligand>
</feature>
<feature type="binding site" evidence="1">
    <location>
        <position position="145"/>
    </location>
    <ligand>
        <name>[4Fe-4S] cluster</name>
        <dbReference type="ChEBI" id="CHEBI:49883"/>
        <label>1</label>
    </ligand>
</feature>
<feature type="binding site" evidence="1">
    <location>
        <position position="165"/>
    </location>
    <ligand>
        <name>[4Fe-4S] cluster</name>
        <dbReference type="ChEBI" id="CHEBI:49883"/>
        <label>2</label>
        <note>4Fe-4S-S-AdoMet</note>
    </ligand>
</feature>
<feature type="binding site" evidence="1">
    <location>
        <position position="169"/>
    </location>
    <ligand>
        <name>[4Fe-4S] cluster</name>
        <dbReference type="ChEBI" id="CHEBI:49883"/>
        <label>2</label>
        <note>4Fe-4S-S-AdoMet</note>
    </ligand>
</feature>
<feature type="binding site" evidence="1">
    <location>
        <position position="172"/>
    </location>
    <ligand>
        <name>[4Fe-4S] cluster</name>
        <dbReference type="ChEBI" id="CHEBI:49883"/>
        <label>2</label>
        <note>4Fe-4S-S-AdoMet</note>
    </ligand>
</feature>
<feature type="binding site" evidence="1">
    <location>
        <position position="390"/>
    </location>
    <ligand>
        <name>[4Fe-4S] cluster</name>
        <dbReference type="ChEBI" id="CHEBI:49883"/>
        <label>1</label>
    </ligand>
</feature>
<comment type="function">
    <text evidence="1">Catalyzes the radical-mediated insertion of two sulfur atoms into the C-6 and C-8 positions of the octanoyl moiety bound to the lipoyl domains of lipoate-dependent enzymes, thereby converting the octanoylated domains into lipoylated derivatives.</text>
</comment>
<comment type="catalytic activity">
    <reaction evidence="1">
        <text>[[Fe-S] cluster scaffold protein carrying a second [4Fe-4S](2+) cluster] + N(6)-octanoyl-L-lysyl-[protein] + 2 oxidized [2Fe-2S]-[ferredoxin] + 2 S-adenosyl-L-methionine + 4 H(+) = [[Fe-S] cluster scaffold protein] + N(6)-[(R)-dihydrolipoyl]-L-lysyl-[protein] + 4 Fe(3+) + 2 hydrogen sulfide + 2 5'-deoxyadenosine + 2 L-methionine + 2 reduced [2Fe-2S]-[ferredoxin]</text>
        <dbReference type="Rhea" id="RHEA:16585"/>
        <dbReference type="Rhea" id="RHEA-COMP:9928"/>
        <dbReference type="Rhea" id="RHEA-COMP:10000"/>
        <dbReference type="Rhea" id="RHEA-COMP:10001"/>
        <dbReference type="Rhea" id="RHEA-COMP:10475"/>
        <dbReference type="Rhea" id="RHEA-COMP:14568"/>
        <dbReference type="Rhea" id="RHEA-COMP:14569"/>
        <dbReference type="ChEBI" id="CHEBI:15378"/>
        <dbReference type="ChEBI" id="CHEBI:17319"/>
        <dbReference type="ChEBI" id="CHEBI:29034"/>
        <dbReference type="ChEBI" id="CHEBI:29919"/>
        <dbReference type="ChEBI" id="CHEBI:33722"/>
        <dbReference type="ChEBI" id="CHEBI:33737"/>
        <dbReference type="ChEBI" id="CHEBI:33738"/>
        <dbReference type="ChEBI" id="CHEBI:57844"/>
        <dbReference type="ChEBI" id="CHEBI:59789"/>
        <dbReference type="ChEBI" id="CHEBI:78809"/>
        <dbReference type="ChEBI" id="CHEBI:83100"/>
        <dbReference type="EC" id="2.8.1.8"/>
    </reaction>
</comment>
<comment type="cofactor">
    <cofactor evidence="1">
        <name>[4Fe-4S] cluster</name>
        <dbReference type="ChEBI" id="CHEBI:49883"/>
    </cofactor>
    <text evidence="1">Binds 2 [4Fe-4S] clusters per subunit. One cluster is coordinated with 3 cysteines and an exchangeable S-adenosyl-L-methionine.</text>
</comment>
<comment type="pathway">
    <text evidence="1">Protein modification; protein lipoylation via endogenous pathway; protein N(6)-(lipoyl)lysine from octanoyl-[acyl-carrier-protein]: step 2/2.</text>
</comment>
<comment type="subcellular location">
    <subcellularLocation>
        <location evidence="1">Mitochondrion</location>
    </subcellularLocation>
</comment>
<comment type="miscellaneous">
    <text evidence="1">This protein may be expected to contain an N-terminal transit peptide but none has been predicted.</text>
</comment>
<comment type="similarity">
    <text evidence="1">Belongs to the radical SAM superfamily. Lipoyl synthase family.</text>
</comment>
<evidence type="ECO:0000255" key="1">
    <source>
        <dbReference type="HAMAP-Rule" id="MF_03123"/>
    </source>
</evidence>
<evidence type="ECO:0000255" key="2">
    <source>
        <dbReference type="PROSITE-ProRule" id="PRU01266"/>
    </source>
</evidence>
<dbReference type="EC" id="2.8.1.8" evidence="1"/>
<dbReference type="EMBL" id="HE601626">
    <property type="protein sequence ID" value="CCD78443.1"/>
    <property type="molecule type" value="Genomic_DNA"/>
</dbReference>
<dbReference type="RefSeq" id="XP_018651054.1">
    <property type="nucleotide sequence ID" value="XM_018799246.1"/>
</dbReference>
<dbReference type="SMR" id="C4PZQ3"/>
<dbReference type="FunCoup" id="C4PZQ3">
    <property type="interactions" value="1808"/>
</dbReference>
<dbReference type="STRING" id="6183.C4PZQ3"/>
<dbReference type="GeneID" id="8353012"/>
<dbReference type="KEGG" id="smm:Smp_010100"/>
<dbReference type="CTD" id="8353012"/>
<dbReference type="eggNOG" id="KOG2672">
    <property type="taxonomic scope" value="Eukaryota"/>
</dbReference>
<dbReference type="HOGENOM" id="CLU_033144_1_2_1"/>
<dbReference type="InParanoid" id="C4PZQ3"/>
<dbReference type="OMA" id="PYCDIDF"/>
<dbReference type="OrthoDB" id="3231at2759"/>
<dbReference type="PhylomeDB" id="C4PZQ3"/>
<dbReference type="UniPathway" id="UPA00538">
    <property type="reaction ID" value="UER00593"/>
</dbReference>
<dbReference type="Proteomes" id="UP000008854">
    <property type="component" value="Chromosome 3"/>
</dbReference>
<dbReference type="GO" id="GO:0005739">
    <property type="term" value="C:mitochondrion"/>
    <property type="evidence" value="ECO:0007669"/>
    <property type="project" value="UniProtKB-SubCell"/>
</dbReference>
<dbReference type="GO" id="GO:0051539">
    <property type="term" value="F:4 iron, 4 sulfur cluster binding"/>
    <property type="evidence" value="ECO:0007669"/>
    <property type="project" value="UniProtKB-UniRule"/>
</dbReference>
<dbReference type="GO" id="GO:0016992">
    <property type="term" value="F:lipoate synthase activity"/>
    <property type="evidence" value="ECO:0007669"/>
    <property type="project" value="UniProtKB-UniRule"/>
</dbReference>
<dbReference type="GO" id="GO:0046872">
    <property type="term" value="F:metal ion binding"/>
    <property type="evidence" value="ECO:0007669"/>
    <property type="project" value="UniProtKB-KW"/>
</dbReference>
<dbReference type="CDD" id="cd01335">
    <property type="entry name" value="Radical_SAM"/>
    <property type="match status" value="1"/>
</dbReference>
<dbReference type="Gene3D" id="3.20.20.70">
    <property type="entry name" value="Aldolase class I"/>
    <property type="match status" value="1"/>
</dbReference>
<dbReference type="HAMAP" id="MF_00206">
    <property type="entry name" value="Lipoyl_synth"/>
    <property type="match status" value="1"/>
</dbReference>
<dbReference type="InterPro" id="IPR013785">
    <property type="entry name" value="Aldolase_TIM"/>
</dbReference>
<dbReference type="InterPro" id="IPR006638">
    <property type="entry name" value="Elp3/MiaA/NifB-like_rSAM"/>
</dbReference>
<dbReference type="InterPro" id="IPR031691">
    <property type="entry name" value="LIAS_N"/>
</dbReference>
<dbReference type="InterPro" id="IPR003698">
    <property type="entry name" value="Lipoyl_synth"/>
</dbReference>
<dbReference type="InterPro" id="IPR007197">
    <property type="entry name" value="rSAM"/>
</dbReference>
<dbReference type="NCBIfam" id="TIGR00510">
    <property type="entry name" value="lipA"/>
    <property type="match status" value="1"/>
</dbReference>
<dbReference type="NCBIfam" id="NF004019">
    <property type="entry name" value="PRK05481.1"/>
    <property type="match status" value="1"/>
</dbReference>
<dbReference type="NCBIfam" id="NF009544">
    <property type="entry name" value="PRK12928.1"/>
    <property type="match status" value="1"/>
</dbReference>
<dbReference type="PANTHER" id="PTHR10949">
    <property type="entry name" value="LIPOYL SYNTHASE"/>
    <property type="match status" value="1"/>
</dbReference>
<dbReference type="PANTHER" id="PTHR10949:SF0">
    <property type="entry name" value="LIPOYL SYNTHASE, MITOCHONDRIAL"/>
    <property type="match status" value="1"/>
</dbReference>
<dbReference type="Pfam" id="PF16881">
    <property type="entry name" value="LIAS_N"/>
    <property type="match status" value="1"/>
</dbReference>
<dbReference type="Pfam" id="PF04055">
    <property type="entry name" value="Radical_SAM"/>
    <property type="match status" value="1"/>
</dbReference>
<dbReference type="PIRSF" id="PIRSF005963">
    <property type="entry name" value="Lipoyl_synth"/>
    <property type="match status" value="1"/>
</dbReference>
<dbReference type="SFLD" id="SFLDF00271">
    <property type="entry name" value="lipoyl_synthase"/>
    <property type="match status" value="1"/>
</dbReference>
<dbReference type="SFLD" id="SFLDG01058">
    <property type="entry name" value="lipoyl_synthase_like"/>
    <property type="match status" value="1"/>
</dbReference>
<dbReference type="SMART" id="SM00729">
    <property type="entry name" value="Elp3"/>
    <property type="match status" value="1"/>
</dbReference>
<dbReference type="SUPFAM" id="SSF102114">
    <property type="entry name" value="Radical SAM enzymes"/>
    <property type="match status" value="1"/>
</dbReference>
<dbReference type="PROSITE" id="PS51918">
    <property type="entry name" value="RADICAL_SAM"/>
    <property type="match status" value="1"/>
</dbReference>
<name>LIAS_SCHMA</name>
<reference key="1">
    <citation type="journal article" date="2009" name="Nature">
        <title>The genome of the blood fluke Schistosoma mansoni.</title>
        <authorList>
            <person name="Berriman M."/>
            <person name="Haas B.J."/>
            <person name="LoVerde P.T."/>
            <person name="Wilson R.A."/>
            <person name="Dillon G.P."/>
            <person name="Cerqueira G.C."/>
            <person name="Mashiyama S.T."/>
            <person name="Al-Lazikani B."/>
            <person name="Andrade L.F."/>
            <person name="Ashton P.D."/>
            <person name="Aslett M.A."/>
            <person name="Bartholomeu D.C."/>
            <person name="Blandin G."/>
            <person name="Caffrey C.R."/>
            <person name="Coghlan A."/>
            <person name="Coulson R."/>
            <person name="Day T.A."/>
            <person name="Delcher A."/>
            <person name="DeMarco R."/>
            <person name="Djikeng A."/>
            <person name="Eyre T."/>
            <person name="Gamble J.A."/>
            <person name="Ghedin E."/>
            <person name="Gu Y."/>
            <person name="Hertz-Fowler C."/>
            <person name="Hirai H."/>
            <person name="Hirai Y."/>
            <person name="Houston R."/>
            <person name="Ivens A."/>
            <person name="Johnston D.A."/>
            <person name="Lacerda D."/>
            <person name="Macedo C.D."/>
            <person name="McVeigh P."/>
            <person name="Ning Z."/>
            <person name="Oliveira G."/>
            <person name="Overington J.P."/>
            <person name="Parkhill J."/>
            <person name="Pertea M."/>
            <person name="Pierce R.J."/>
            <person name="Protasio A.V."/>
            <person name="Quail M.A."/>
            <person name="Rajandream M.A."/>
            <person name="Rogers J."/>
            <person name="Sajid M."/>
            <person name="Salzberg S.L."/>
            <person name="Stanke M."/>
            <person name="Tivey A.R."/>
            <person name="White O."/>
            <person name="Williams D.L."/>
            <person name="Wortman J."/>
            <person name="Wu W."/>
            <person name="Zamanian M."/>
            <person name="Zerlotini A."/>
            <person name="Fraser-Liggett C.M."/>
            <person name="Barrell B.G."/>
            <person name="El-Sayed N.M."/>
        </authorList>
    </citation>
    <scope>NUCLEOTIDE SEQUENCE [LARGE SCALE GENOMIC DNA]</scope>
    <source>
        <strain>Puerto Rican</strain>
    </source>
</reference>
<reference key="2">
    <citation type="journal article" date="2012" name="PLoS Negl. Trop. Dis.">
        <title>A systematically improved high quality genome and transcriptome of the human blood fluke Schistosoma mansoni.</title>
        <authorList>
            <person name="Protasio A.V."/>
            <person name="Tsai I.J."/>
            <person name="Babbage A."/>
            <person name="Nichol S."/>
            <person name="Hunt M."/>
            <person name="Aslett M.A."/>
            <person name="De Silva N."/>
            <person name="Velarde G.S."/>
            <person name="Anderson T.J."/>
            <person name="Clark R.C."/>
            <person name="Davidson C."/>
            <person name="Dillon G.P."/>
            <person name="Holroyd N.E."/>
            <person name="LoVerde P.T."/>
            <person name="Lloyd C."/>
            <person name="McQuillan J."/>
            <person name="Oliveira G."/>
            <person name="Otto T.D."/>
            <person name="Parker-Manuel S.J."/>
            <person name="Quail M.A."/>
            <person name="Wilson R.A."/>
            <person name="Zerlotini A."/>
            <person name="Dunne D.W."/>
            <person name="Berriman M."/>
        </authorList>
    </citation>
    <scope>NUCLEOTIDE SEQUENCE [LARGE SCALE GENOMIC DNA]</scope>
    <source>
        <strain>Puerto Rican</strain>
    </source>
</reference>
<protein>
    <recommendedName>
        <fullName evidence="1">Lipoyl synthase, mitochondrial</fullName>
        <ecNumber evidence="1">2.8.1.8</ecNumber>
    </recommendedName>
    <alternativeName>
        <fullName evidence="1">Lipoate synthase</fullName>
        <shortName evidence="1">LS</shortName>
        <shortName evidence="1">Lip-syn</shortName>
    </alternativeName>
    <alternativeName>
        <fullName evidence="1">Lipoic acid synthase</fullName>
    </alternativeName>
</protein>
<organism>
    <name type="scientific">Schistosoma mansoni</name>
    <name type="common">Blood fluke</name>
    <dbReference type="NCBI Taxonomy" id="6183"/>
    <lineage>
        <taxon>Eukaryota</taxon>
        <taxon>Metazoa</taxon>
        <taxon>Spiralia</taxon>
        <taxon>Lophotrochozoa</taxon>
        <taxon>Platyhelminthes</taxon>
        <taxon>Trematoda</taxon>
        <taxon>Digenea</taxon>
        <taxon>Strigeidida</taxon>
        <taxon>Schistosomatoidea</taxon>
        <taxon>Schistosomatidae</taxon>
        <taxon>Schistosoma</taxon>
    </lineage>
</organism>
<sequence>MGLLLPRGSYVFPVLASVSAATKRRAEWSYIKINITHSYSSNDKSSEFEEDNPTQKLSPEFQKAIAHGPSLSEFIKLSNNNQSTKEDFFSSPSSVNKSGKSLRLPEWLKTEIPCGGSVARLQKQLRSLNLHTVCEEARCPNISECWTAGKSTAATATIMIMGDTCTRGCRFCSVKTSPNPPPLDPDEPVNTAEAISKWDVDYIVITSVDRDDLGDGGARHIAKTIRQIKVRKPSIIVECLVPDFRGCTDSIHTVVRASPEVYAHNIETVESLQRVVRDHRAGYIQSLRSLETAKERSNRLVSSGDADFLVVTKSSIMLGLGEKEKEVMIALKDLRQAGVDCVTIGQYVQPTKRHLKVKEYIHPDKFDYWAKIGNDLGFLYTASGPLVRSSYRAGEYYIKHIIDQRKRKNI</sequence>
<gene>
    <name type="ORF">Smp_010100</name>
</gene>